<comment type="function">
    <text evidence="1">Joins adenosylcobinamide-GDP and alpha-ribazole to generate adenosylcobalamin (Ado-cobalamin). Also synthesizes adenosylcobalamin 5'-phosphate from adenosylcobinamide-GDP and alpha-ribazole 5'-phosphate.</text>
</comment>
<comment type="catalytic activity">
    <reaction evidence="1">
        <text>alpha-ribazole + adenosylcob(III)inamide-GDP = adenosylcob(III)alamin + GMP + H(+)</text>
        <dbReference type="Rhea" id="RHEA:16049"/>
        <dbReference type="ChEBI" id="CHEBI:10329"/>
        <dbReference type="ChEBI" id="CHEBI:15378"/>
        <dbReference type="ChEBI" id="CHEBI:18408"/>
        <dbReference type="ChEBI" id="CHEBI:58115"/>
        <dbReference type="ChEBI" id="CHEBI:60487"/>
        <dbReference type="EC" id="2.7.8.26"/>
    </reaction>
</comment>
<comment type="catalytic activity">
    <reaction evidence="1">
        <text>alpha-ribazole 5'-phosphate + adenosylcob(III)inamide-GDP = adenosylcob(III)alamin 5'-phosphate + GMP + H(+)</text>
        <dbReference type="Rhea" id="RHEA:23560"/>
        <dbReference type="ChEBI" id="CHEBI:15378"/>
        <dbReference type="ChEBI" id="CHEBI:57918"/>
        <dbReference type="ChEBI" id="CHEBI:58115"/>
        <dbReference type="ChEBI" id="CHEBI:60487"/>
        <dbReference type="ChEBI" id="CHEBI:60493"/>
        <dbReference type="EC" id="2.7.8.26"/>
    </reaction>
</comment>
<comment type="cofactor">
    <cofactor evidence="1">
        <name>Mg(2+)</name>
        <dbReference type="ChEBI" id="CHEBI:18420"/>
    </cofactor>
</comment>
<comment type="pathway">
    <text evidence="1">Cofactor biosynthesis; adenosylcobalamin biosynthesis; adenosylcobalamin from cob(II)yrinate a,c-diamide: step 7/7.</text>
</comment>
<comment type="subcellular location">
    <subcellularLocation>
        <location evidence="1">Cell inner membrane</location>
        <topology evidence="1">Multi-pass membrane protein</topology>
    </subcellularLocation>
</comment>
<comment type="similarity">
    <text evidence="1">Belongs to the CobS family.</text>
</comment>
<keyword id="KW-0997">Cell inner membrane</keyword>
<keyword id="KW-1003">Cell membrane</keyword>
<keyword id="KW-0169">Cobalamin biosynthesis</keyword>
<keyword id="KW-0460">Magnesium</keyword>
<keyword id="KW-0472">Membrane</keyword>
<keyword id="KW-0808">Transferase</keyword>
<keyword id="KW-0812">Transmembrane</keyword>
<keyword id="KW-1133">Transmembrane helix</keyword>
<dbReference type="EC" id="2.7.8.26" evidence="1"/>
<dbReference type="EMBL" id="AE016823">
    <property type="protein sequence ID" value="AAS71899.1"/>
    <property type="molecule type" value="Genomic_DNA"/>
</dbReference>
<dbReference type="RefSeq" id="WP_001038032.1">
    <property type="nucleotide sequence ID" value="NC_005823.1"/>
</dbReference>
<dbReference type="KEGG" id="lic:LIC_13357"/>
<dbReference type="HOGENOM" id="CLU_057426_1_1_12"/>
<dbReference type="UniPathway" id="UPA00148">
    <property type="reaction ID" value="UER00238"/>
</dbReference>
<dbReference type="Proteomes" id="UP000007037">
    <property type="component" value="Chromosome I"/>
</dbReference>
<dbReference type="GO" id="GO:0005886">
    <property type="term" value="C:plasma membrane"/>
    <property type="evidence" value="ECO:0007669"/>
    <property type="project" value="UniProtKB-SubCell"/>
</dbReference>
<dbReference type="GO" id="GO:0051073">
    <property type="term" value="F:adenosylcobinamide-GDP ribazoletransferase activity"/>
    <property type="evidence" value="ECO:0007669"/>
    <property type="project" value="UniProtKB-UniRule"/>
</dbReference>
<dbReference type="GO" id="GO:0008818">
    <property type="term" value="F:cobalamin 5'-phosphate synthase activity"/>
    <property type="evidence" value="ECO:0007669"/>
    <property type="project" value="UniProtKB-UniRule"/>
</dbReference>
<dbReference type="GO" id="GO:0009236">
    <property type="term" value="P:cobalamin biosynthetic process"/>
    <property type="evidence" value="ECO:0007669"/>
    <property type="project" value="UniProtKB-UniRule"/>
</dbReference>
<dbReference type="HAMAP" id="MF_00719">
    <property type="entry name" value="CobS"/>
    <property type="match status" value="1"/>
</dbReference>
<dbReference type="InterPro" id="IPR003805">
    <property type="entry name" value="CobS"/>
</dbReference>
<dbReference type="PANTHER" id="PTHR34148">
    <property type="entry name" value="ADENOSYLCOBINAMIDE-GDP RIBAZOLETRANSFERASE"/>
    <property type="match status" value="1"/>
</dbReference>
<dbReference type="PANTHER" id="PTHR34148:SF1">
    <property type="entry name" value="ADENOSYLCOBINAMIDE-GDP RIBAZOLETRANSFERASE"/>
    <property type="match status" value="1"/>
</dbReference>
<dbReference type="Pfam" id="PF02654">
    <property type="entry name" value="CobS"/>
    <property type="match status" value="1"/>
</dbReference>
<feature type="chain" id="PRO_0000146880" description="Adenosylcobinamide-GDP ribazoletransferase">
    <location>
        <begin position="1"/>
        <end position="265"/>
    </location>
</feature>
<feature type="transmembrane region" description="Helical" evidence="1">
    <location>
        <begin position="59"/>
        <end position="79"/>
    </location>
</feature>
<feature type="transmembrane region" description="Helical" evidence="1">
    <location>
        <begin position="113"/>
        <end position="133"/>
    </location>
</feature>
<feature type="transmembrane region" description="Helical" evidence="1">
    <location>
        <begin position="141"/>
        <end position="161"/>
    </location>
</feature>
<feature type="transmembrane region" description="Helical" evidence="1">
    <location>
        <begin position="183"/>
        <end position="203"/>
    </location>
</feature>
<feature type="transmembrane region" description="Helical" evidence="1">
    <location>
        <begin position="206"/>
        <end position="226"/>
    </location>
</feature>
<reference key="1">
    <citation type="journal article" date="2004" name="J. Bacteriol.">
        <title>Comparative genomics of two Leptospira interrogans serovars reveals novel insights into physiology and pathogenesis.</title>
        <authorList>
            <person name="Nascimento A.L.T.O."/>
            <person name="Ko A.I."/>
            <person name="Martins E.A.L."/>
            <person name="Monteiro-Vitorello C.B."/>
            <person name="Ho P.L."/>
            <person name="Haake D.A."/>
            <person name="Verjovski-Almeida S."/>
            <person name="Hartskeerl R.A."/>
            <person name="Marques M.V."/>
            <person name="Oliveira M.C."/>
            <person name="Menck C.F.M."/>
            <person name="Leite L.C.C."/>
            <person name="Carrer H."/>
            <person name="Coutinho L.L."/>
            <person name="Degrave W.M."/>
            <person name="Dellagostin O.A."/>
            <person name="El-Dorry H."/>
            <person name="Ferro E.S."/>
            <person name="Ferro M.I.T."/>
            <person name="Furlan L.R."/>
            <person name="Gamberini M."/>
            <person name="Giglioti E.A."/>
            <person name="Goes-Neto A."/>
            <person name="Goldman G.H."/>
            <person name="Goldman M.H.S."/>
            <person name="Harakava R."/>
            <person name="Jeronimo S.M.B."/>
            <person name="Junqueira-de-Azevedo I.L.M."/>
            <person name="Kimura E.T."/>
            <person name="Kuramae E.E."/>
            <person name="Lemos E.G.M."/>
            <person name="Lemos M.V.F."/>
            <person name="Marino C.L."/>
            <person name="Nunes L.R."/>
            <person name="de Oliveira R.C."/>
            <person name="Pereira G.G."/>
            <person name="Reis M.S."/>
            <person name="Schriefer A."/>
            <person name="Siqueira W.J."/>
            <person name="Sommer P."/>
            <person name="Tsai S.M."/>
            <person name="Simpson A.J.G."/>
            <person name="Ferro J.A."/>
            <person name="Camargo L.E.A."/>
            <person name="Kitajima J.P."/>
            <person name="Setubal J.C."/>
            <person name="Van Sluys M.A."/>
        </authorList>
    </citation>
    <scope>NUCLEOTIDE SEQUENCE [LARGE SCALE GENOMIC DNA]</scope>
    <source>
        <strain>Fiocruz L1-130</strain>
    </source>
</reference>
<name>COBS_LEPIC</name>
<proteinExistence type="inferred from homology"/>
<gene>
    <name evidence="1" type="primary">cobS</name>
    <name type="ordered locus">LIC_13357</name>
</gene>
<accession>Q72M34</accession>
<sequence length="265" mass="30572">MNKLQEEWNRFCASWMFNTRLPILPFYVYSESTLSRSSRYFPLIGWIVSAGTSYSTYFLSWILPIEISIILGMILSVLITGGFHEDGLADVCDAFGGGWSKEKILEIMKDSRIGTFGSIGLILSLGLKYLLLVNLFKISPWIFLFTSWFSHSASRWFALLLMMLIPYARENDLSKSKPMIKKLPPFDFALSTFFGCFPAVYFLYQFQNQIPNVLLGFFLSSIFVFYFRNYFNKWIEGFTGDCLGFIQQGTELLFYLGITVSWNSI</sequence>
<evidence type="ECO:0000255" key="1">
    <source>
        <dbReference type="HAMAP-Rule" id="MF_00719"/>
    </source>
</evidence>
<organism>
    <name type="scientific">Leptospira interrogans serogroup Icterohaemorrhagiae serovar copenhageni (strain Fiocruz L1-130)</name>
    <dbReference type="NCBI Taxonomy" id="267671"/>
    <lineage>
        <taxon>Bacteria</taxon>
        <taxon>Pseudomonadati</taxon>
        <taxon>Spirochaetota</taxon>
        <taxon>Spirochaetia</taxon>
        <taxon>Leptospirales</taxon>
        <taxon>Leptospiraceae</taxon>
        <taxon>Leptospira</taxon>
    </lineage>
</organism>
<protein>
    <recommendedName>
        <fullName evidence="1">Adenosylcobinamide-GDP ribazoletransferase</fullName>
        <ecNumber evidence="1">2.7.8.26</ecNumber>
    </recommendedName>
    <alternativeName>
        <fullName evidence="1">Cobalamin synthase</fullName>
    </alternativeName>
    <alternativeName>
        <fullName evidence="1">Cobalamin-5'-phosphate synthase</fullName>
    </alternativeName>
</protein>